<accession>Q11CQ1</accession>
<evidence type="ECO:0000255" key="1">
    <source>
        <dbReference type="HAMAP-Rule" id="MF_00658"/>
    </source>
</evidence>
<comment type="function">
    <text evidence="1">Specifically methylates the pseudouridine at position 1915 (m3Psi1915) in 23S rRNA.</text>
</comment>
<comment type="catalytic activity">
    <reaction evidence="1">
        <text>pseudouridine(1915) in 23S rRNA + S-adenosyl-L-methionine = N(3)-methylpseudouridine(1915) in 23S rRNA + S-adenosyl-L-homocysteine + H(+)</text>
        <dbReference type="Rhea" id="RHEA:42752"/>
        <dbReference type="Rhea" id="RHEA-COMP:10221"/>
        <dbReference type="Rhea" id="RHEA-COMP:10222"/>
        <dbReference type="ChEBI" id="CHEBI:15378"/>
        <dbReference type="ChEBI" id="CHEBI:57856"/>
        <dbReference type="ChEBI" id="CHEBI:59789"/>
        <dbReference type="ChEBI" id="CHEBI:65314"/>
        <dbReference type="ChEBI" id="CHEBI:74486"/>
        <dbReference type="EC" id="2.1.1.177"/>
    </reaction>
</comment>
<comment type="subunit">
    <text evidence="1">Homodimer.</text>
</comment>
<comment type="subcellular location">
    <subcellularLocation>
        <location evidence="1">Cytoplasm</location>
    </subcellularLocation>
</comment>
<comment type="similarity">
    <text evidence="1">Belongs to the RNA methyltransferase RlmH family.</text>
</comment>
<name>RLMH_CHESB</name>
<protein>
    <recommendedName>
        <fullName evidence="1">Ribosomal RNA large subunit methyltransferase H</fullName>
        <ecNumber evidence="1">2.1.1.177</ecNumber>
    </recommendedName>
    <alternativeName>
        <fullName evidence="1">23S rRNA (pseudouridine1915-N3)-methyltransferase</fullName>
    </alternativeName>
    <alternativeName>
        <fullName evidence="1">23S rRNA m3Psi1915 methyltransferase</fullName>
    </alternativeName>
    <alternativeName>
        <fullName evidence="1">rRNA (pseudouridine-N3-)-methyltransferase RlmH</fullName>
    </alternativeName>
</protein>
<feature type="chain" id="PRO_0000260569" description="Ribosomal RNA large subunit methyltransferase H">
    <location>
        <begin position="1"/>
        <end position="173"/>
    </location>
</feature>
<feature type="binding site" evidence="1">
    <location>
        <position position="89"/>
    </location>
    <ligand>
        <name>S-adenosyl-L-methionine</name>
        <dbReference type="ChEBI" id="CHEBI:59789"/>
    </ligand>
</feature>
<feature type="binding site" evidence="1">
    <location>
        <position position="121"/>
    </location>
    <ligand>
        <name>S-adenosyl-L-methionine</name>
        <dbReference type="ChEBI" id="CHEBI:59789"/>
    </ligand>
</feature>
<keyword id="KW-0963">Cytoplasm</keyword>
<keyword id="KW-0489">Methyltransferase</keyword>
<keyword id="KW-0698">rRNA processing</keyword>
<keyword id="KW-0949">S-adenosyl-L-methionine</keyword>
<keyword id="KW-0808">Transferase</keyword>
<sequence>MFRRYADTLTSEGFIRIVIHAVGRMKAGPERELADRYLDRAAKAGPAIGMELAGVSEIPESRARSTLERKREEGRKLLDFAQGGALILLDERGKNLSSRELGDRFASFRDSGFRQIVMAIGGPDGHDDAVRAAADLSISFGAQTWPHQLVRVMLAEQLYRLITILSGHPYHRD</sequence>
<proteinExistence type="inferred from homology"/>
<gene>
    <name evidence="1" type="primary">rlmH</name>
    <name type="ordered locus">Meso_3453</name>
</gene>
<organism>
    <name type="scientific">Chelativorans sp. (strain BNC1)</name>
    <dbReference type="NCBI Taxonomy" id="266779"/>
    <lineage>
        <taxon>Bacteria</taxon>
        <taxon>Pseudomonadati</taxon>
        <taxon>Pseudomonadota</taxon>
        <taxon>Alphaproteobacteria</taxon>
        <taxon>Hyphomicrobiales</taxon>
        <taxon>Phyllobacteriaceae</taxon>
        <taxon>Chelativorans</taxon>
    </lineage>
</organism>
<reference key="1">
    <citation type="submission" date="2006-06" db="EMBL/GenBank/DDBJ databases">
        <title>Complete sequence of chromosome of Mesorhizobium sp. BNC1.</title>
        <authorList>
            <consortium name="US DOE Joint Genome Institute"/>
            <person name="Copeland A."/>
            <person name="Lucas S."/>
            <person name="Lapidus A."/>
            <person name="Barry K."/>
            <person name="Detter J.C."/>
            <person name="Glavina del Rio T."/>
            <person name="Hammon N."/>
            <person name="Israni S."/>
            <person name="Dalin E."/>
            <person name="Tice H."/>
            <person name="Pitluck S."/>
            <person name="Chertkov O."/>
            <person name="Brettin T."/>
            <person name="Bruce D."/>
            <person name="Han C."/>
            <person name="Tapia R."/>
            <person name="Gilna P."/>
            <person name="Schmutz J."/>
            <person name="Larimer F."/>
            <person name="Land M."/>
            <person name="Hauser L."/>
            <person name="Kyrpides N."/>
            <person name="Mikhailova N."/>
            <person name="Richardson P."/>
        </authorList>
    </citation>
    <scope>NUCLEOTIDE SEQUENCE [LARGE SCALE GENOMIC DNA]</scope>
    <source>
        <strain>BNC1</strain>
    </source>
</reference>
<dbReference type="EC" id="2.1.1.177" evidence="1"/>
<dbReference type="EMBL" id="CP000390">
    <property type="protein sequence ID" value="ABG64824.1"/>
    <property type="molecule type" value="Genomic_DNA"/>
</dbReference>
<dbReference type="SMR" id="Q11CQ1"/>
<dbReference type="STRING" id="266779.Meso_3453"/>
<dbReference type="KEGG" id="mes:Meso_3453"/>
<dbReference type="eggNOG" id="COG1576">
    <property type="taxonomic scope" value="Bacteria"/>
</dbReference>
<dbReference type="HOGENOM" id="CLU_100552_1_1_5"/>
<dbReference type="GO" id="GO:0005737">
    <property type="term" value="C:cytoplasm"/>
    <property type="evidence" value="ECO:0007669"/>
    <property type="project" value="UniProtKB-SubCell"/>
</dbReference>
<dbReference type="GO" id="GO:0070038">
    <property type="term" value="F:rRNA (pseudouridine-N3-)-methyltransferase activity"/>
    <property type="evidence" value="ECO:0007669"/>
    <property type="project" value="UniProtKB-UniRule"/>
</dbReference>
<dbReference type="CDD" id="cd18081">
    <property type="entry name" value="RlmH-like"/>
    <property type="match status" value="1"/>
</dbReference>
<dbReference type="Gene3D" id="3.40.1280.10">
    <property type="match status" value="1"/>
</dbReference>
<dbReference type="HAMAP" id="MF_00658">
    <property type="entry name" value="23SrRNA_methyltr_H"/>
    <property type="match status" value="1"/>
</dbReference>
<dbReference type="InterPro" id="IPR029028">
    <property type="entry name" value="Alpha/beta_knot_MTases"/>
</dbReference>
<dbReference type="InterPro" id="IPR003742">
    <property type="entry name" value="RlmH-like"/>
</dbReference>
<dbReference type="InterPro" id="IPR029026">
    <property type="entry name" value="tRNA_m1G_MTases_N"/>
</dbReference>
<dbReference type="NCBIfam" id="NF000989">
    <property type="entry name" value="PRK00103.2-3"/>
    <property type="match status" value="1"/>
</dbReference>
<dbReference type="PANTHER" id="PTHR33603">
    <property type="entry name" value="METHYLTRANSFERASE"/>
    <property type="match status" value="1"/>
</dbReference>
<dbReference type="PANTHER" id="PTHR33603:SF1">
    <property type="entry name" value="RIBOSOMAL RNA LARGE SUBUNIT METHYLTRANSFERASE H"/>
    <property type="match status" value="1"/>
</dbReference>
<dbReference type="Pfam" id="PF02590">
    <property type="entry name" value="SPOUT_MTase"/>
    <property type="match status" value="1"/>
</dbReference>
<dbReference type="PIRSF" id="PIRSF004505">
    <property type="entry name" value="MT_bac"/>
    <property type="match status" value="1"/>
</dbReference>
<dbReference type="SUPFAM" id="SSF75217">
    <property type="entry name" value="alpha/beta knot"/>
    <property type="match status" value="1"/>
</dbReference>